<evidence type="ECO:0000255" key="1">
    <source>
        <dbReference type="HAMAP-Rule" id="MF_01343"/>
    </source>
</evidence>
<evidence type="ECO:0000305" key="2"/>
<feature type="chain" id="PRO_0000115391" description="Small ribosomal subunit protein uS15">
    <location>
        <begin position="1"/>
        <end position="89"/>
    </location>
</feature>
<reference key="1">
    <citation type="journal article" date="2005" name="Genome Res.">
        <title>Genome sequence of Blochmannia pennsylvanicus indicates parallel evolutionary trends among bacterial mutualists of insects.</title>
        <authorList>
            <person name="Degnan P.H."/>
            <person name="Lazarus A.B."/>
            <person name="Wernegreen J.J."/>
        </authorList>
    </citation>
    <scope>NUCLEOTIDE SEQUENCE [LARGE SCALE GENOMIC DNA]</scope>
    <source>
        <strain>BPEN</strain>
    </source>
</reference>
<keyword id="KW-1185">Reference proteome</keyword>
<keyword id="KW-0687">Ribonucleoprotein</keyword>
<keyword id="KW-0689">Ribosomal protein</keyword>
<keyword id="KW-0694">RNA-binding</keyword>
<keyword id="KW-0699">rRNA-binding</keyword>
<accession>Q493T4</accession>
<sequence>MSWSVEKKREIISTFGRNVKDTGSTEVQVALLTERIDHLKHHFLKHKKDHHSRRGLLKMVAHRRRLLKYLKENNMLHYTNLIRNLGLRH</sequence>
<gene>
    <name evidence="1" type="primary">rpsO</name>
    <name type="ordered locus">BPEN_111</name>
</gene>
<protein>
    <recommendedName>
        <fullName evidence="1">Small ribosomal subunit protein uS15</fullName>
    </recommendedName>
    <alternativeName>
        <fullName evidence="2">30S ribosomal protein S15</fullName>
    </alternativeName>
</protein>
<dbReference type="EMBL" id="CP000016">
    <property type="protein sequence ID" value="AAZ40751.1"/>
    <property type="molecule type" value="Genomic_DNA"/>
</dbReference>
<dbReference type="RefSeq" id="WP_011282658.1">
    <property type="nucleotide sequence ID" value="NC_007292.1"/>
</dbReference>
<dbReference type="SMR" id="Q493T4"/>
<dbReference type="STRING" id="291272.BPEN_111"/>
<dbReference type="KEGG" id="bpn:BPEN_111"/>
<dbReference type="eggNOG" id="COG0184">
    <property type="taxonomic scope" value="Bacteria"/>
</dbReference>
<dbReference type="HOGENOM" id="CLU_148518_0_0_6"/>
<dbReference type="OrthoDB" id="9799262at2"/>
<dbReference type="Proteomes" id="UP000007794">
    <property type="component" value="Chromosome"/>
</dbReference>
<dbReference type="GO" id="GO:0022627">
    <property type="term" value="C:cytosolic small ribosomal subunit"/>
    <property type="evidence" value="ECO:0007669"/>
    <property type="project" value="TreeGrafter"/>
</dbReference>
<dbReference type="GO" id="GO:0019843">
    <property type="term" value="F:rRNA binding"/>
    <property type="evidence" value="ECO:0007669"/>
    <property type="project" value="UniProtKB-UniRule"/>
</dbReference>
<dbReference type="GO" id="GO:0003735">
    <property type="term" value="F:structural constituent of ribosome"/>
    <property type="evidence" value="ECO:0007669"/>
    <property type="project" value="InterPro"/>
</dbReference>
<dbReference type="GO" id="GO:0006412">
    <property type="term" value="P:translation"/>
    <property type="evidence" value="ECO:0007669"/>
    <property type="project" value="UniProtKB-UniRule"/>
</dbReference>
<dbReference type="CDD" id="cd00353">
    <property type="entry name" value="Ribosomal_S15p_S13e"/>
    <property type="match status" value="1"/>
</dbReference>
<dbReference type="FunFam" id="1.10.287.10:FF:000002">
    <property type="entry name" value="30S ribosomal protein S15"/>
    <property type="match status" value="1"/>
</dbReference>
<dbReference type="Gene3D" id="6.10.250.3130">
    <property type="match status" value="1"/>
</dbReference>
<dbReference type="Gene3D" id="1.10.287.10">
    <property type="entry name" value="S15/NS1, RNA-binding"/>
    <property type="match status" value="1"/>
</dbReference>
<dbReference type="HAMAP" id="MF_01343_B">
    <property type="entry name" value="Ribosomal_uS15_B"/>
    <property type="match status" value="1"/>
</dbReference>
<dbReference type="InterPro" id="IPR000589">
    <property type="entry name" value="Ribosomal_uS15"/>
</dbReference>
<dbReference type="InterPro" id="IPR005290">
    <property type="entry name" value="Ribosomal_uS15_bac-type"/>
</dbReference>
<dbReference type="InterPro" id="IPR009068">
    <property type="entry name" value="uS15_NS1_RNA-bd_sf"/>
</dbReference>
<dbReference type="NCBIfam" id="TIGR00952">
    <property type="entry name" value="S15_bact"/>
    <property type="match status" value="1"/>
</dbReference>
<dbReference type="PANTHER" id="PTHR23321">
    <property type="entry name" value="RIBOSOMAL PROTEIN S15, BACTERIAL AND ORGANELLAR"/>
    <property type="match status" value="1"/>
</dbReference>
<dbReference type="PANTHER" id="PTHR23321:SF26">
    <property type="entry name" value="SMALL RIBOSOMAL SUBUNIT PROTEIN US15M"/>
    <property type="match status" value="1"/>
</dbReference>
<dbReference type="Pfam" id="PF00312">
    <property type="entry name" value="Ribosomal_S15"/>
    <property type="match status" value="1"/>
</dbReference>
<dbReference type="SMART" id="SM01387">
    <property type="entry name" value="Ribosomal_S15"/>
    <property type="match status" value="1"/>
</dbReference>
<dbReference type="SUPFAM" id="SSF47060">
    <property type="entry name" value="S15/NS1 RNA-binding domain"/>
    <property type="match status" value="1"/>
</dbReference>
<dbReference type="PROSITE" id="PS00362">
    <property type="entry name" value="RIBOSOMAL_S15"/>
    <property type="match status" value="1"/>
</dbReference>
<comment type="function">
    <text evidence="1">One of the primary rRNA binding proteins, it binds directly to 16S rRNA where it helps nucleate assembly of the platform of the 30S subunit by binding and bridging several RNA helices of the 16S rRNA.</text>
</comment>
<comment type="function">
    <text evidence="1">Forms an intersubunit bridge (bridge B4) with the 23S rRNA of the 50S subunit in the ribosome.</text>
</comment>
<comment type="subunit">
    <text evidence="1">Part of the 30S ribosomal subunit. Forms a bridge to the 50S subunit in the 70S ribosome, contacting the 23S rRNA.</text>
</comment>
<comment type="similarity">
    <text evidence="1">Belongs to the universal ribosomal protein uS15 family.</text>
</comment>
<proteinExistence type="inferred from homology"/>
<organism>
    <name type="scientific">Blochmanniella pennsylvanica (strain BPEN)</name>
    <dbReference type="NCBI Taxonomy" id="291272"/>
    <lineage>
        <taxon>Bacteria</taxon>
        <taxon>Pseudomonadati</taxon>
        <taxon>Pseudomonadota</taxon>
        <taxon>Gammaproteobacteria</taxon>
        <taxon>Enterobacterales</taxon>
        <taxon>Enterobacteriaceae</taxon>
        <taxon>ant endosymbionts</taxon>
        <taxon>Candidatus Blochmanniella</taxon>
    </lineage>
</organism>
<name>RS15_BLOPB</name>